<sequence length="25" mass="2828">MDSKAVLKGMLEKAYRIEAGFEKRG</sequence>
<feature type="chain" id="PRO_0000127849" description="Uncharacterized protein AF_0194">
    <location>
        <begin position="1"/>
        <end position="25"/>
    </location>
</feature>
<protein>
    <recommendedName>
        <fullName>Uncharacterized protein AF_0194</fullName>
    </recommendedName>
</protein>
<organism>
    <name type="scientific">Archaeoglobus fulgidus (strain ATCC 49558 / DSM 4304 / JCM 9628 / NBRC 100126 / VC-16)</name>
    <dbReference type="NCBI Taxonomy" id="224325"/>
    <lineage>
        <taxon>Archaea</taxon>
        <taxon>Methanobacteriati</taxon>
        <taxon>Methanobacteriota</taxon>
        <taxon>Archaeoglobi</taxon>
        <taxon>Archaeoglobales</taxon>
        <taxon>Archaeoglobaceae</taxon>
        <taxon>Archaeoglobus</taxon>
    </lineage>
</organism>
<proteinExistence type="predicted"/>
<dbReference type="EMBL" id="AE000782">
    <property type="protein sequence ID" value="AAB91054.1"/>
    <property type="molecule type" value="Genomic_DNA"/>
</dbReference>
<dbReference type="PIR" id="B69274">
    <property type="entry name" value="B69274"/>
</dbReference>
<dbReference type="STRING" id="224325.AF_0194"/>
<dbReference type="PaxDb" id="224325-AF_0194"/>
<dbReference type="EnsemblBacteria" id="AAB91054">
    <property type="protein sequence ID" value="AAB91054"/>
    <property type="gene ID" value="AF_0194"/>
</dbReference>
<dbReference type="KEGG" id="afu:AF_0194"/>
<dbReference type="HOGENOM" id="CLU_3418645_0_0_2"/>
<dbReference type="Proteomes" id="UP000002199">
    <property type="component" value="Chromosome"/>
</dbReference>
<accession>O30045</accession>
<gene>
    <name type="ordered locus">AF_0194</name>
</gene>
<reference key="1">
    <citation type="journal article" date="1997" name="Nature">
        <title>The complete genome sequence of the hyperthermophilic, sulphate-reducing archaeon Archaeoglobus fulgidus.</title>
        <authorList>
            <person name="Klenk H.-P."/>
            <person name="Clayton R.A."/>
            <person name="Tomb J.-F."/>
            <person name="White O."/>
            <person name="Nelson K.E."/>
            <person name="Ketchum K.A."/>
            <person name="Dodson R.J."/>
            <person name="Gwinn M.L."/>
            <person name="Hickey E.K."/>
            <person name="Peterson J.D."/>
            <person name="Richardson D.L."/>
            <person name="Kerlavage A.R."/>
            <person name="Graham D.E."/>
            <person name="Kyrpides N.C."/>
            <person name="Fleischmann R.D."/>
            <person name="Quackenbush J."/>
            <person name="Lee N.H."/>
            <person name="Sutton G.G."/>
            <person name="Gill S.R."/>
            <person name="Kirkness E.F."/>
            <person name="Dougherty B.A."/>
            <person name="McKenney K."/>
            <person name="Adams M.D."/>
            <person name="Loftus B.J."/>
            <person name="Peterson S.N."/>
            <person name="Reich C.I."/>
            <person name="McNeil L.K."/>
            <person name="Badger J.H."/>
            <person name="Glodek A."/>
            <person name="Zhou L."/>
            <person name="Overbeek R."/>
            <person name="Gocayne J.D."/>
            <person name="Weidman J.F."/>
            <person name="McDonald L.A."/>
            <person name="Utterback T.R."/>
            <person name="Cotton M.D."/>
            <person name="Spriggs T."/>
            <person name="Artiach P."/>
            <person name="Kaine B.P."/>
            <person name="Sykes S.M."/>
            <person name="Sadow P.W."/>
            <person name="D'Andrea K.P."/>
            <person name="Bowman C."/>
            <person name="Fujii C."/>
            <person name="Garland S.A."/>
            <person name="Mason T.M."/>
            <person name="Olsen G.J."/>
            <person name="Fraser C.M."/>
            <person name="Smith H.O."/>
            <person name="Woese C.R."/>
            <person name="Venter J.C."/>
        </authorList>
    </citation>
    <scope>NUCLEOTIDE SEQUENCE [LARGE SCALE GENOMIC DNA]</scope>
    <source>
        <strain>ATCC 49558 / DSM 4304 / JCM 9628 / NBRC 100126 / VC-16</strain>
    </source>
</reference>
<name>Y194_ARCFU</name>
<keyword id="KW-1185">Reference proteome</keyword>